<protein>
    <recommendedName>
        <fullName>Beta-defensin 18</fullName>
        <shortName>BD-18</shortName>
        <shortName>mBD-18</shortName>
    </recommendedName>
    <alternativeName>
        <fullName>Defensin, beta 18</fullName>
    </alternativeName>
</protein>
<organism>
    <name type="scientific">Mus musculus</name>
    <name type="common">Mouse</name>
    <dbReference type="NCBI Taxonomy" id="10090"/>
    <lineage>
        <taxon>Eukaryota</taxon>
        <taxon>Metazoa</taxon>
        <taxon>Chordata</taxon>
        <taxon>Craniata</taxon>
        <taxon>Vertebrata</taxon>
        <taxon>Euteleostomi</taxon>
        <taxon>Mammalia</taxon>
        <taxon>Eutheria</taxon>
        <taxon>Euarchontoglires</taxon>
        <taxon>Glires</taxon>
        <taxon>Rodentia</taxon>
        <taxon>Myomorpha</taxon>
        <taxon>Muroidea</taxon>
        <taxon>Muridae</taxon>
        <taxon>Murinae</taxon>
        <taxon>Mus</taxon>
        <taxon>Mus</taxon>
    </lineage>
</organism>
<proteinExistence type="inferred from homology"/>
<name>DFB18_MOUSE</name>
<accession>Q30KP5</accession>
<reference key="1">
    <citation type="journal article" date="2005" name="Physiol. Genomics">
        <title>Cross-species analysis of the mammalian beta-defensin gene family: presence of syntenic gene clusters and preferential expression in the male reproductive tract.</title>
        <authorList>
            <person name="Patil A.A."/>
            <person name="Cai Y."/>
            <person name="Sang Y."/>
            <person name="Blecha F."/>
            <person name="Zhang G."/>
        </authorList>
    </citation>
    <scope>NUCLEOTIDE SEQUENCE [MRNA]</scope>
</reference>
<dbReference type="EMBL" id="DQ012029">
    <property type="protein sequence ID" value="AAY59765.1"/>
    <property type="molecule type" value="mRNA"/>
</dbReference>
<dbReference type="CCDS" id="CCDS35520.1"/>
<dbReference type="RefSeq" id="NP_001034212.1">
    <property type="nucleotide sequence ID" value="NM_001039123.2"/>
</dbReference>
<dbReference type="STRING" id="10090.ENSMUSP00000095427"/>
<dbReference type="iPTMnet" id="Q30KP5"/>
<dbReference type="PhosphoSitePlus" id="Q30KP5"/>
<dbReference type="jPOST" id="Q30KP5"/>
<dbReference type="PaxDb" id="10090-ENSMUSP00000095427"/>
<dbReference type="DNASU" id="654460"/>
<dbReference type="Ensembl" id="ENSMUST00000097818.2">
    <property type="protein sequence ID" value="ENSMUSP00000095427.2"/>
    <property type="gene ID" value="ENSMUSG00000073735.2"/>
</dbReference>
<dbReference type="GeneID" id="654460"/>
<dbReference type="KEGG" id="mmu:654460"/>
<dbReference type="UCSC" id="uc007akm.1">
    <property type="organism name" value="mouse"/>
</dbReference>
<dbReference type="AGR" id="MGI:3648148"/>
<dbReference type="CTD" id="654460"/>
<dbReference type="MGI" id="MGI:3648148">
    <property type="gene designation" value="Defb18"/>
</dbReference>
<dbReference type="VEuPathDB" id="HostDB:ENSMUSG00000073735"/>
<dbReference type="eggNOG" id="ENOG502TEDM">
    <property type="taxonomic scope" value="Eukaryota"/>
</dbReference>
<dbReference type="GeneTree" id="ENSGT00400000023306"/>
<dbReference type="HOGENOM" id="CLU_169780_0_0_1"/>
<dbReference type="InParanoid" id="Q30KP5"/>
<dbReference type="OMA" id="GACKPEC"/>
<dbReference type="OrthoDB" id="9834241at2759"/>
<dbReference type="PhylomeDB" id="Q30KP5"/>
<dbReference type="Reactome" id="R-MMU-1461957">
    <property type="pathway name" value="Beta defensins"/>
</dbReference>
<dbReference type="Reactome" id="R-MMU-1461973">
    <property type="pathway name" value="Defensins"/>
</dbReference>
<dbReference type="BioGRID-ORCS" id="654460">
    <property type="hits" value="3 hits in 76 CRISPR screens"/>
</dbReference>
<dbReference type="PRO" id="PR:Q30KP5"/>
<dbReference type="Proteomes" id="UP000000589">
    <property type="component" value="Chromosome 1"/>
</dbReference>
<dbReference type="RNAct" id="Q30KP5">
    <property type="molecule type" value="protein"/>
</dbReference>
<dbReference type="Bgee" id="ENSMUSG00000073735">
    <property type="expression patterns" value="Expressed in hypothalamus and 2 other cell types or tissues"/>
</dbReference>
<dbReference type="GO" id="GO:0005576">
    <property type="term" value="C:extracellular region"/>
    <property type="evidence" value="ECO:0007669"/>
    <property type="project" value="UniProtKB-SubCell"/>
</dbReference>
<dbReference type="GO" id="GO:0042742">
    <property type="term" value="P:defense response to bacterium"/>
    <property type="evidence" value="ECO:0007669"/>
    <property type="project" value="UniProtKB-KW"/>
</dbReference>
<dbReference type="GO" id="GO:0045087">
    <property type="term" value="P:innate immune response"/>
    <property type="evidence" value="ECO:0007669"/>
    <property type="project" value="InterPro"/>
</dbReference>
<dbReference type="InterPro" id="IPR025933">
    <property type="entry name" value="Beta_defensin_dom"/>
</dbReference>
<dbReference type="PANTHER" id="PTHR39411">
    <property type="entry name" value="BETA-DEFENSIN 113"/>
    <property type="match status" value="1"/>
</dbReference>
<dbReference type="PANTHER" id="PTHR39411:SF1">
    <property type="entry name" value="BETA-DEFENSIN 113"/>
    <property type="match status" value="1"/>
</dbReference>
<dbReference type="Pfam" id="PF13841">
    <property type="entry name" value="Defensin_beta_2"/>
    <property type="match status" value="1"/>
</dbReference>
<evidence type="ECO:0000250" key="1"/>
<evidence type="ECO:0000255" key="2"/>
<evidence type="ECO:0000305" key="3"/>
<comment type="function">
    <text evidence="1">Has antibacterial activity.</text>
</comment>
<comment type="subcellular location">
    <subcellularLocation>
        <location evidence="1">Secreted</location>
    </subcellularLocation>
</comment>
<comment type="similarity">
    <text evidence="3">Belongs to the beta-defensin family.</text>
</comment>
<keyword id="KW-0044">Antibiotic</keyword>
<keyword id="KW-0929">Antimicrobial</keyword>
<keyword id="KW-0211">Defensin</keyword>
<keyword id="KW-1015">Disulfide bond</keyword>
<keyword id="KW-1185">Reference proteome</keyword>
<keyword id="KW-0964">Secreted</keyword>
<keyword id="KW-0732">Signal</keyword>
<gene>
    <name type="primary">Defb18</name>
</gene>
<feature type="signal peptide" evidence="2">
    <location>
        <begin position="1"/>
        <end position="23"/>
    </location>
</feature>
<feature type="chain" id="PRO_0000352703" description="Beta-defensin 18">
    <location>
        <begin position="24"/>
        <end position="85"/>
    </location>
</feature>
<feature type="disulfide bond" evidence="1">
    <location>
        <begin position="39"/>
        <end position="65"/>
    </location>
</feature>
<feature type="disulfide bond" evidence="1">
    <location>
        <begin position="46"/>
        <end position="60"/>
    </location>
</feature>
<feature type="disulfide bond" evidence="1">
    <location>
        <begin position="50"/>
        <end position="66"/>
    </location>
</feature>
<sequence length="85" mass="9887">MQSTMKMFGIILMVIFSVSCGPSAPQMKTREVAERTHKCSLVRGTCKSECNSWEYKYNYCHTEPCCVVREYKRMEKLLSTPKYTT</sequence>